<protein>
    <recommendedName>
        <fullName>Uncharacterized lipoprotein SAB0389</fullName>
    </recommendedName>
</protein>
<organism>
    <name type="scientific">Staphylococcus aureus (strain bovine RF122 / ET3-1)</name>
    <dbReference type="NCBI Taxonomy" id="273036"/>
    <lineage>
        <taxon>Bacteria</taxon>
        <taxon>Bacillati</taxon>
        <taxon>Bacillota</taxon>
        <taxon>Bacilli</taxon>
        <taxon>Bacillales</taxon>
        <taxon>Staphylococcaceae</taxon>
        <taxon>Staphylococcus</taxon>
    </lineage>
</organism>
<proteinExistence type="inferred from homology"/>
<reference key="1">
    <citation type="journal article" date="2007" name="PLoS ONE">
        <title>Molecular correlates of host specialization in Staphylococcus aureus.</title>
        <authorList>
            <person name="Herron-Olson L."/>
            <person name="Fitzgerald J.R."/>
            <person name="Musser J.M."/>
            <person name="Kapur V."/>
        </authorList>
    </citation>
    <scope>NUCLEOTIDE SEQUENCE [LARGE SCALE GENOMIC DNA]</scope>
    <source>
        <strain>bovine RF122 / ET3-1</strain>
    </source>
</reference>
<comment type="subcellular location">
    <subcellularLocation>
        <location evidence="1">Cell membrane</location>
        <topology evidence="1">Lipid-anchor</topology>
    </subcellularLocation>
</comment>
<comment type="similarity">
    <text evidence="2">Belongs to the staphylococcal tandem lipoprotein family.</text>
</comment>
<dbReference type="EMBL" id="AJ938182">
    <property type="protein sequence ID" value="CAI80077.1"/>
    <property type="molecule type" value="Genomic_DNA"/>
</dbReference>
<dbReference type="RefSeq" id="WP_011382191.1">
    <property type="nucleotide sequence ID" value="NC_007622.1"/>
</dbReference>
<dbReference type="SMR" id="Q2YVR1"/>
<dbReference type="KEGG" id="sab:SAB0389"/>
<dbReference type="HOGENOM" id="CLU_071589_0_1_9"/>
<dbReference type="GO" id="GO:0005886">
    <property type="term" value="C:plasma membrane"/>
    <property type="evidence" value="ECO:0007669"/>
    <property type="project" value="UniProtKB-SubCell"/>
</dbReference>
<dbReference type="Gene3D" id="2.50.20.40">
    <property type="match status" value="1"/>
</dbReference>
<dbReference type="InterPro" id="IPR007595">
    <property type="entry name" value="Csa"/>
</dbReference>
<dbReference type="InterPro" id="IPR038641">
    <property type="entry name" value="Csa_sf"/>
</dbReference>
<dbReference type="NCBIfam" id="TIGR01742">
    <property type="entry name" value="SA_tandem_lipo"/>
    <property type="match status" value="1"/>
</dbReference>
<dbReference type="Pfam" id="PF04507">
    <property type="entry name" value="DUF576"/>
    <property type="match status" value="1"/>
</dbReference>
<dbReference type="PROSITE" id="PS51257">
    <property type="entry name" value="PROKAR_LIPOPROTEIN"/>
    <property type="match status" value="1"/>
</dbReference>
<accession>Q2YVR1</accession>
<feature type="signal peptide" evidence="1">
    <location>
        <begin position="1"/>
        <end position="22"/>
    </location>
</feature>
<feature type="chain" id="PRO_0000282095" description="Uncharacterized lipoprotein SAB0389">
    <location>
        <begin position="23"/>
        <end position="260"/>
    </location>
</feature>
<feature type="lipid moiety-binding region" description="N-palmitoyl cysteine" evidence="1">
    <location>
        <position position="23"/>
    </location>
</feature>
<feature type="lipid moiety-binding region" description="S-diacylglycerol cysteine" evidence="1">
    <location>
        <position position="23"/>
    </location>
</feature>
<evidence type="ECO:0000255" key="1">
    <source>
        <dbReference type="PROSITE-ProRule" id="PRU00303"/>
    </source>
</evidence>
<evidence type="ECO:0000305" key="2"/>
<name>Y389_STAAB</name>
<gene>
    <name type="ordered locus">SAB0389</name>
</gene>
<keyword id="KW-1003">Cell membrane</keyword>
<keyword id="KW-0449">Lipoprotein</keyword>
<keyword id="KW-0472">Membrane</keyword>
<keyword id="KW-0564">Palmitate</keyword>
<keyword id="KW-0732">Signal</keyword>
<sequence>MGYIKRIGLYISIFILIVMVAGCGKDNEIKEYSKETQIKNSFAKTLDMYPIKNLEDLYDKEGYRDGEFKKGDKGTWTLLTSFSKSNKPGVIDDEGMVLYLNRNTKKATGYYFVNKIYDDISKNQNEKKYRVELKNNKIVLLDNVEDEKLKQKIENFKFFSQYADFKDLKNYQDGSITTNENVPSYEAEYKLNNSDTNVKKLRDIYPITTKKAAILKLHIDGDIKGSSVGYKKIEYKFSKVKDQETTLRDYLNFGPSDEDS</sequence>